<sequence length="154" mass="17623">MSELCPCGSILNYHECCGPYILGTQVAAKPAILMRSRYCAYVEKNVDYLIATWHPDCHAQEWRESIIQGFTKTVWHGLTVIAETPGRHPDEAFVEFIARFTDADNAQITAMHERSRFLRIKEHWYYIDGIRPSLGRNDTCLCGSGKKHKKCCGR</sequence>
<dbReference type="EMBL" id="CP000950">
    <property type="protein sequence ID" value="ACA68366.1"/>
    <property type="molecule type" value="Genomic_DNA"/>
</dbReference>
<dbReference type="RefSeq" id="WP_002210666.1">
    <property type="nucleotide sequence ID" value="NZ_CP009792.1"/>
</dbReference>
<dbReference type="SMR" id="B1JLE7"/>
<dbReference type="KEGG" id="ypy:YPK_2079"/>
<dbReference type="PATRIC" id="fig|502800.11.peg.2757"/>
<dbReference type="Gene3D" id="3.10.450.50">
    <property type="match status" value="1"/>
</dbReference>
<dbReference type="HAMAP" id="MF_00612">
    <property type="entry name" value="UPF0225"/>
    <property type="match status" value="1"/>
</dbReference>
<dbReference type="InterPro" id="IPR032710">
    <property type="entry name" value="NTF2-like_dom_sf"/>
</dbReference>
<dbReference type="InterPro" id="IPR004027">
    <property type="entry name" value="SEC_C_motif"/>
</dbReference>
<dbReference type="InterPro" id="IPR023006">
    <property type="entry name" value="UPF0225"/>
</dbReference>
<dbReference type="InterPro" id="IPR048469">
    <property type="entry name" value="YchJ-like_M"/>
</dbReference>
<dbReference type="NCBIfam" id="NF002449">
    <property type="entry name" value="PRK01617.1"/>
    <property type="match status" value="1"/>
</dbReference>
<dbReference type="NCBIfam" id="NF002486">
    <property type="entry name" value="PRK01752.1"/>
    <property type="match status" value="1"/>
</dbReference>
<dbReference type="PANTHER" id="PTHR33747:SF1">
    <property type="entry name" value="ADENYLATE CYCLASE-ASSOCIATED CAP C-TERMINAL DOMAIN-CONTAINING PROTEIN"/>
    <property type="match status" value="1"/>
</dbReference>
<dbReference type="PANTHER" id="PTHR33747">
    <property type="entry name" value="UPF0225 PROTEIN SCO1677"/>
    <property type="match status" value="1"/>
</dbReference>
<dbReference type="Pfam" id="PF02810">
    <property type="entry name" value="SEC-C"/>
    <property type="match status" value="2"/>
</dbReference>
<dbReference type="Pfam" id="PF17775">
    <property type="entry name" value="YchJ_M-like"/>
    <property type="match status" value="1"/>
</dbReference>
<dbReference type="SUPFAM" id="SSF54427">
    <property type="entry name" value="NTF2-like"/>
    <property type="match status" value="1"/>
</dbReference>
<dbReference type="SUPFAM" id="SSF103642">
    <property type="entry name" value="Sec-C motif"/>
    <property type="match status" value="1"/>
</dbReference>
<protein>
    <recommendedName>
        <fullName evidence="1">UPF0225 protein YPK_2079</fullName>
    </recommendedName>
</protein>
<name>Y2079_YERPY</name>
<accession>B1JLE7</accession>
<evidence type="ECO:0000255" key="1">
    <source>
        <dbReference type="HAMAP-Rule" id="MF_00612"/>
    </source>
</evidence>
<comment type="similarity">
    <text evidence="1">Belongs to the UPF0225 family.</text>
</comment>
<feature type="chain" id="PRO_1000130398" description="UPF0225 protein YPK_2079">
    <location>
        <begin position="1"/>
        <end position="154"/>
    </location>
</feature>
<proteinExistence type="inferred from homology"/>
<organism>
    <name type="scientific">Yersinia pseudotuberculosis serotype O:3 (strain YPIII)</name>
    <dbReference type="NCBI Taxonomy" id="502800"/>
    <lineage>
        <taxon>Bacteria</taxon>
        <taxon>Pseudomonadati</taxon>
        <taxon>Pseudomonadota</taxon>
        <taxon>Gammaproteobacteria</taxon>
        <taxon>Enterobacterales</taxon>
        <taxon>Yersiniaceae</taxon>
        <taxon>Yersinia</taxon>
    </lineage>
</organism>
<reference key="1">
    <citation type="submission" date="2008-02" db="EMBL/GenBank/DDBJ databases">
        <title>Complete sequence of Yersinia pseudotuberculosis YPIII.</title>
        <authorList>
            <consortium name="US DOE Joint Genome Institute"/>
            <person name="Copeland A."/>
            <person name="Lucas S."/>
            <person name="Lapidus A."/>
            <person name="Glavina del Rio T."/>
            <person name="Dalin E."/>
            <person name="Tice H."/>
            <person name="Bruce D."/>
            <person name="Goodwin L."/>
            <person name="Pitluck S."/>
            <person name="Munk A.C."/>
            <person name="Brettin T."/>
            <person name="Detter J.C."/>
            <person name="Han C."/>
            <person name="Tapia R."/>
            <person name="Schmutz J."/>
            <person name="Larimer F."/>
            <person name="Land M."/>
            <person name="Hauser L."/>
            <person name="Challacombe J.F."/>
            <person name="Green L."/>
            <person name="Lindler L.E."/>
            <person name="Nikolich M.P."/>
            <person name="Richardson P."/>
        </authorList>
    </citation>
    <scope>NUCLEOTIDE SEQUENCE [LARGE SCALE GENOMIC DNA]</scope>
    <source>
        <strain>YPIII</strain>
    </source>
</reference>
<gene>
    <name type="ordered locus">YPK_2079</name>
</gene>